<gene>
    <name evidence="1" type="primary">uvrC</name>
    <name type="ordered locus">HRM2_23330</name>
</gene>
<evidence type="ECO:0000255" key="1">
    <source>
        <dbReference type="HAMAP-Rule" id="MF_00203"/>
    </source>
</evidence>
<dbReference type="EMBL" id="CP001087">
    <property type="protein sequence ID" value="ACN15428.1"/>
    <property type="molecule type" value="Genomic_DNA"/>
</dbReference>
<dbReference type="RefSeq" id="WP_015904196.1">
    <property type="nucleotide sequence ID" value="NC_012108.1"/>
</dbReference>
<dbReference type="SMR" id="C0QET6"/>
<dbReference type="STRING" id="177437.HRM2_23330"/>
<dbReference type="KEGG" id="dat:HRM2_23330"/>
<dbReference type="eggNOG" id="COG0322">
    <property type="taxonomic scope" value="Bacteria"/>
</dbReference>
<dbReference type="HOGENOM" id="CLU_014841_3_2_7"/>
<dbReference type="OrthoDB" id="9804933at2"/>
<dbReference type="Proteomes" id="UP000000442">
    <property type="component" value="Chromosome"/>
</dbReference>
<dbReference type="GO" id="GO:0005737">
    <property type="term" value="C:cytoplasm"/>
    <property type="evidence" value="ECO:0007669"/>
    <property type="project" value="UniProtKB-SubCell"/>
</dbReference>
<dbReference type="GO" id="GO:0009380">
    <property type="term" value="C:excinuclease repair complex"/>
    <property type="evidence" value="ECO:0007669"/>
    <property type="project" value="InterPro"/>
</dbReference>
<dbReference type="GO" id="GO:0003677">
    <property type="term" value="F:DNA binding"/>
    <property type="evidence" value="ECO:0007669"/>
    <property type="project" value="UniProtKB-UniRule"/>
</dbReference>
<dbReference type="GO" id="GO:0009381">
    <property type="term" value="F:excinuclease ABC activity"/>
    <property type="evidence" value="ECO:0007669"/>
    <property type="project" value="UniProtKB-UniRule"/>
</dbReference>
<dbReference type="GO" id="GO:0006289">
    <property type="term" value="P:nucleotide-excision repair"/>
    <property type="evidence" value="ECO:0007669"/>
    <property type="project" value="UniProtKB-UniRule"/>
</dbReference>
<dbReference type="GO" id="GO:0009432">
    <property type="term" value="P:SOS response"/>
    <property type="evidence" value="ECO:0007669"/>
    <property type="project" value="UniProtKB-UniRule"/>
</dbReference>
<dbReference type="CDD" id="cd10434">
    <property type="entry name" value="GIY-YIG_UvrC_Cho"/>
    <property type="match status" value="1"/>
</dbReference>
<dbReference type="FunFam" id="3.40.1440.10:FF:000001">
    <property type="entry name" value="UvrABC system protein C"/>
    <property type="match status" value="1"/>
</dbReference>
<dbReference type="Gene3D" id="1.10.150.20">
    <property type="entry name" value="5' to 3' exonuclease, C-terminal subdomain"/>
    <property type="match status" value="1"/>
</dbReference>
<dbReference type="Gene3D" id="3.40.1440.10">
    <property type="entry name" value="GIY-YIG endonuclease"/>
    <property type="match status" value="1"/>
</dbReference>
<dbReference type="Gene3D" id="4.10.860.10">
    <property type="entry name" value="UVR domain"/>
    <property type="match status" value="1"/>
</dbReference>
<dbReference type="Gene3D" id="3.30.420.340">
    <property type="entry name" value="UvrC, RNAse H endonuclease domain"/>
    <property type="match status" value="1"/>
</dbReference>
<dbReference type="HAMAP" id="MF_00203">
    <property type="entry name" value="UvrC"/>
    <property type="match status" value="1"/>
</dbReference>
<dbReference type="InterPro" id="IPR000305">
    <property type="entry name" value="GIY-YIG_endonuc"/>
</dbReference>
<dbReference type="InterPro" id="IPR035901">
    <property type="entry name" value="GIY-YIG_endonuc_sf"/>
</dbReference>
<dbReference type="InterPro" id="IPR047296">
    <property type="entry name" value="GIY-YIG_UvrC_Cho"/>
</dbReference>
<dbReference type="InterPro" id="IPR010994">
    <property type="entry name" value="RuvA_2-like"/>
</dbReference>
<dbReference type="InterPro" id="IPR001943">
    <property type="entry name" value="UVR_dom"/>
</dbReference>
<dbReference type="InterPro" id="IPR036876">
    <property type="entry name" value="UVR_dom_sf"/>
</dbReference>
<dbReference type="InterPro" id="IPR050066">
    <property type="entry name" value="UvrABC_protein_C"/>
</dbReference>
<dbReference type="InterPro" id="IPR004791">
    <property type="entry name" value="UvrC"/>
</dbReference>
<dbReference type="InterPro" id="IPR001162">
    <property type="entry name" value="UvrC_RNase_H_dom"/>
</dbReference>
<dbReference type="InterPro" id="IPR038476">
    <property type="entry name" value="UvrC_RNase_H_dom_sf"/>
</dbReference>
<dbReference type="NCBIfam" id="TIGR00194">
    <property type="entry name" value="uvrC"/>
    <property type="match status" value="1"/>
</dbReference>
<dbReference type="PANTHER" id="PTHR30562:SF1">
    <property type="entry name" value="UVRABC SYSTEM PROTEIN C"/>
    <property type="match status" value="1"/>
</dbReference>
<dbReference type="PANTHER" id="PTHR30562">
    <property type="entry name" value="UVRC/OXIDOREDUCTASE"/>
    <property type="match status" value="1"/>
</dbReference>
<dbReference type="Pfam" id="PF01541">
    <property type="entry name" value="GIY-YIG"/>
    <property type="match status" value="1"/>
</dbReference>
<dbReference type="Pfam" id="PF02151">
    <property type="entry name" value="UVR"/>
    <property type="match status" value="1"/>
</dbReference>
<dbReference type="Pfam" id="PF22920">
    <property type="entry name" value="UvrC_RNaseH"/>
    <property type="match status" value="1"/>
</dbReference>
<dbReference type="Pfam" id="PF08459">
    <property type="entry name" value="UvrC_RNaseH_dom"/>
    <property type="match status" value="1"/>
</dbReference>
<dbReference type="SMART" id="SM00465">
    <property type="entry name" value="GIYc"/>
    <property type="match status" value="1"/>
</dbReference>
<dbReference type="SUPFAM" id="SSF46600">
    <property type="entry name" value="C-terminal UvrC-binding domain of UvrB"/>
    <property type="match status" value="1"/>
</dbReference>
<dbReference type="SUPFAM" id="SSF82771">
    <property type="entry name" value="GIY-YIG endonuclease"/>
    <property type="match status" value="1"/>
</dbReference>
<dbReference type="SUPFAM" id="SSF47781">
    <property type="entry name" value="RuvA domain 2-like"/>
    <property type="match status" value="1"/>
</dbReference>
<dbReference type="PROSITE" id="PS50164">
    <property type="entry name" value="GIY_YIG"/>
    <property type="match status" value="1"/>
</dbReference>
<dbReference type="PROSITE" id="PS50151">
    <property type="entry name" value="UVR"/>
    <property type="match status" value="1"/>
</dbReference>
<dbReference type="PROSITE" id="PS50165">
    <property type="entry name" value="UVRC"/>
    <property type="match status" value="1"/>
</dbReference>
<keyword id="KW-0963">Cytoplasm</keyword>
<keyword id="KW-0227">DNA damage</keyword>
<keyword id="KW-0228">DNA excision</keyword>
<keyword id="KW-0234">DNA repair</keyword>
<keyword id="KW-0267">Excision nuclease</keyword>
<keyword id="KW-1185">Reference proteome</keyword>
<keyword id="KW-0742">SOS response</keyword>
<feature type="chain" id="PRO_1000204117" description="UvrABC system protein C">
    <location>
        <begin position="1"/>
        <end position="606"/>
    </location>
</feature>
<feature type="domain" description="GIY-YIG" evidence="1">
    <location>
        <begin position="14"/>
        <end position="93"/>
    </location>
</feature>
<feature type="domain" description="UVR" evidence="1">
    <location>
        <begin position="203"/>
        <end position="238"/>
    </location>
</feature>
<accession>C0QET6</accession>
<sequence>MTPSVLERYQSAPQNPGVYLMKDKRGTIIYVGKALNLKKRLASYFARETGHDMKTGVLLKKVVDFDLIVTATEHEALILESTLIKKHSPRYNVILKDGKSYPCLRIDTSKPFPALEVVRKIGDDNAVYFGPYSSVQSVRSTIKQVNKIFKLRKCRDVQFANRTRPCLNYQINACLGACCNRVSRQEYARVVGDVILFLKGRAPDLINRLKFEMQTEADLEHFERAAQIRDTILAIQTTLERQVVVSTDRTDRDVIACAINGEKAVVTILFVRSGNLVGSRNYPFDTGLSGVPEILDAFVRHYYERSLFIPGQILIAEKIENHGLVQDLLIEKRGKRVSLVVPERGDKRRLVEMALVNAQKELEKNLSIQNEAWETLTALQTILGMSVYPRRIECFDNSNMAGTDPVSSMVVFVDGLACKSEYRKFIIRDAKENDDYACMTEVLTRRLSSTEAPLPDLLVVDGGKGQLSMAVAVLKSLGLENRFQVAGLAKKDAKLGEVYDKIYLPGRANPVNTRGALKALYLVQRLRDEAHRFAITFQRKRRSKRAGTSVLDAVPGIGKKRKQVLMTTYKGISRMGQATVEELASLPGMTLAAAQQVKSALALDKD</sequence>
<reference key="1">
    <citation type="journal article" date="2009" name="Environ. Microbiol.">
        <title>Genome sequence of Desulfobacterium autotrophicum HRM2, a marine sulfate reducer oxidizing organic carbon completely to carbon dioxide.</title>
        <authorList>
            <person name="Strittmatter A.W."/>
            <person name="Liesegang H."/>
            <person name="Rabus R."/>
            <person name="Decker I."/>
            <person name="Amann J."/>
            <person name="Andres S."/>
            <person name="Henne A."/>
            <person name="Fricke W.F."/>
            <person name="Martinez-Arias R."/>
            <person name="Bartels D."/>
            <person name="Goesmann A."/>
            <person name="Krause L."/>
            <person name="Puehler A."/>
            <person name="Klenk H.P."/>
            <person name="Richter M."/>
            <person name="Schuler M."/>
            <person name="Gloeckner F.O."/>
            <person name="Meyerdierks A."/>
            <person name="Gottschalk G."/>
            <person name="Amann R."/>
        </authorList>
    </citation>
    <scope>NUCLEOTIDE SEQUENCE [LARGE SCALE GENOMIC DNA]</scope>
    <source>
        <strain>ATCC 43914 / DSM 3382 / VKM B-1955 / HRM2</strain>
    </source>
</reference>
<name>UVRC_DESAH</name>
<protein>
    <recommendedName>
        <fullName evidence="1">UvrABC system protein C</fullName>
        <shortName evidence="1">Protein UvrC</shortName>
    </recommendedName>
    <alternativeName>
        <fullName evidence="1">Excinuclease ABC subunit C</fullName>
    </alternativeName>
</protein>
<proteinExistence type="inferred from homology"/>
<organism>
    <name type="scientific">Desulforapulum autotrophicum (strain ATCC 43914 / DSM 3382 / VKM B-1955 / HRM2)</name>
    <name type="common">Desulfobacterium autotrophicum</name>
    <dbReference type="NCBI Taxonomy" id="177437"/>
    <lineage>
        <taxon>Bacteria</taxon>
        <taxon>Pseudomonadati</taxon>
        <taxon>Thermodesulfobacteriota</taxon>
        <taxon>Desulfobacteria</taxon>
        <taxon>Desulfobacterales</taxon>
        <taxon>Desulfobacteraceae</taxon>
        <taxon>Desulforapulum</taxon>
    </lineage>
</organism>
<comment type="function">
    <text evidence="1">The UvrABC repair system catalyzes the recognition and processing of DNA lesions. UvrC both incises the 5' and 3' sides of the lesion. The N-terminal half is responsible for the 3' incision and the C-terminal half is responsible for the 5' incision.</text>
</comment>
<comment type="subunit">
    <text evidence="1">Interacts with UvrB in an incision complex.</text>
</comment>
<comment type="subcellular location">
    <subcellularLocation>
        <location evidence="1">Cytoplasm</location>
    </subcellularLocation>
</comment>
<comment type="similarity">
    <text evidence="1">Belongs to the UvrC family.</text>
</comment>